<keyword id="KW-0066">ATP synthesis</keyword>
<keyword id="KW-0067">ATP-binding</keyword>
<keyword id="KW-0139">CF(1)</keyword>
<keyword id="KW-0375">Hydrogen ion transport</keyword>
<keyword id="KW-0406">Ion transport</keyword>
<keyword id="KW-0472">Membrane</keyword>
<keyword id="KW-0496">Mitochondrion</keyword>
<keyword id="KW-0999">Mitochondrion inner membrane</keyword>
<keyword id="KW-0547">Nucleotide-binding</keyword>
<keyword id="KW-0809">Transit peptide</keyword>
<keyword id="KW-1278">Translocase</keyword>
<keyword id="KW-0813">Transport</keyword>
<name>ATPB_DROVI</name>
<accession>Q24751</accession>
<dbReference type="EC" id="7.1.2.2"/>
<dbReference type="EMBL" id="X86017">
    <property type="protein sequence ID" value="CAA60012.1"/>
    <property type="molecule type" value="Genomic_DNA"/>
</dbReference>
<dbReference type="SMR" id="Q24751"/>
<dbReference type="eggNOG" id="KOG1350">
    <property type="taxonomic scope" value="Eukaryota"/>
</dbReference>
<dbReference type="OrthoDB" id="14523at2759"/>
<dbReference type="ChiTaRS" id="ATPsynbeta">
    <property type="organism name" value="fly"/>
</dbReference>
<dbReference type="GO" id="GO:0005743">
    <property type="term" value="C:mitochondrial inner membrane"/>
    <property type="evidence" value="ECO:0007669"/>
    <property type="project" value="UniProtKB-SubCell"/>
</dbReference>
<dbReference type="GO" id="GO:0045259">
    <property type="term" value="C:proton-transporting ATP synthase complex"/>
    <property type="evidence" value="ECO:0007669"/>
    <property type="project" value="UniProtKB-KW"/>
</dbReference>
<dbReference type="GO" id="GO:0005524">
    <property type="term" value="F:ATP binding"/>
    <property type="evidence" value="ECO:0007669"/>
    <property type="project" value="UniProtKB-KW"/>
</dbReference>
<dbReference type="GO" id="GO:0046933">
    <property type="term" value="F:proton-transporting ATP synthase activity, rotational mechanism"/>
    <property type="evidence" value="ECO:0007669"/>
    <property type="project" value="TreeGrafter"/>
</dbReference>
<dbReference type="GO" id="GO:0042776">
    <property type="term" value="P:proton motive force-driven mitochondrial ATP synthesis"/>
    <property type="evidence" value="ECO:0007669"/>
    <property type="project" value="TreeGrafter"/>
</dbReference>
<dbReference type="CDD" id="cd18115">
    <property type="entry name" value="ATP-synt_F1_beta_N"/>
    <property type="match status" value="1"/>
</dbReference>
<dbReference type="FunFam" id="3.40.50.300:FF:004189">
    <property type="entry name" value="AGAP012081-PA"/>
    <property type="match status" value="1"/>
</dbReference>
<dbReference type="FunFam" id="2.40.10.170:FF:000004">
    <property type="entry name" value="ATP synthase subunit beta"/>
    <property type="match status" value="1"/>
</dbReference>
<dbReference type="Gene3D" id="2.40.10.170">
    <property type="match status" value="1"/>
</dbReference>
<dbReference type="Gene3D" id="3.40.50.300">
    <property type="entry name" value="P-loop containing nucleotide triphosphate hydrolases"/>
    <property type="match status" value="1"/>
</dbReference>
<dbReference type="InterPro" id="IPR050053">
    <property type="entry name" value="ATPase_alpha/beta_chains"/>
</dbReference>
<dbReference type="InterPro" id="IPR004100">
    <property type="entry name" value="ATPase_F1/V1/A1_a/bsu_N"/>
</dbReference>
<dbReference type="InterPro" id="IPR036121">
    <property type="entry name" value="ATPase_F1/V1/A1_a/bsu_N_sf"/>
</dbReference>
<dbReference type="InterPro" id="IPR000194">
    <property type="entry name" value="ATPase_F1/V1/A1_a/bsu_nucl-bd"/>
</dbReference>
<dbReference type="InterPro" id="IPR027417">
    <property type="entry name" value="P-loop_NTPase"/>
</dbReference>
<dbReference type="PANTHER" id="PTHR15184">
    <property type="entry name" value="ATP SYNTHASE"/>
    <property type="match status" value="1"/>
</dbReference>
<dbReference type="PANTHER" id="PTHR15184:SF71">
    <property type="entry name" value="ATP SYNTHASE SUBUNIT BETA, MITOCHONDRIAL"/>
    <property type="match status" value="1"/>
</dbReference>
<dbReference type="Pfam" id="PF00006">
    <property type="entry name" value="ATP-synt_ab"/>
    <property type="match status" value="1"/>
</dbReference>
<dbReference type="Pfam" id="PF02874">
    <property type="entry name" value="ATP-synt_ab_N"/>
    <property type="match status" value="1"/>
</dbReference>
<dbReference type="SUPFAM" id="SSF50615">
    <property type="entry name" value="N-terminal domain of alpha and beta subunits of F1 ATP synthase"/>
    <property type="match status" value="1"/>
</dbReference>
<dbReference type="SUPFAM" id="SSF52540">
    <property type="entry name" value="P-loop containing nucleoside triphosphate hydrolases"/>
    <property type="match status" value="1"/>
</dbReference>
<reference key="1">
    <citation type="journal article" date="1995" name="Biochem. J.">
        <title>Analysis of the mitochondrial ATP synthase beta-subunit gene in Drosophilidae: structure, transcriptional regulatory features and developmental pattern of expression in Drosophila melanogaster.</title>
        <authorList>
            <person name="Pena P."/>
            <person name="Ugalde C."/>
            <person name="Calleja M."/>
            <person name="Garesse R."/>
        </authorList>
    </citation>
    <scope>NUCLEOTIDE SEQUENCE [GENOMIC DNA]</scope>
</reference>
<gene>
    <name evidence="2" type="primary">ATPsynbeta</name>
    <name type="synonym">ATPsyn-beta</name>
</gene>
<sequence length="228" mass="23965">MFALRAAAKADKNLLPFLGQLSRSHAAKAAKAAAVANGKIVAVIGAVVDVQFDDNLPPILNALEVDNRSPRLVLEVAQHLGENTVRTIAMDGTEGLVRGQKVLDTGSPIRIPVGAETLGRIMNVIGEPIDERGPIPSAKTSPIHAEAPEFVDMSVEQEILVTGIKVVDLLAPYCKGGKIGLFGGAGVGKTVLIMELINNVAKAHGGFSVFAGVGERTREGNDLYNEMI</sequence>
<protein>
    <recommendedName>
        <fullName>ATP synthase subunit beta, mitochondrial</fullName>
        <ecNumber>7.1.2.2</ecNumber>
    </recommendedName>
</protein>
<organism>
    <name type="scientific">Drosophila virilis</name>
    <name type="common">Fruit fly</name>
    <dbReference type="NCBI Taxonomy" id="7244"/>
    <lineage>
        <taxon>Eukaryota</taxon>
        <taxon>Metazoa</taxon>
        <taxon>Ecdysozoa</taxon>
        <taxon>Arthropoda</taxon>
        <taxon>Hexapoda</taxon>
        <taxon>Insecta</taxon>
        <taxon>Pterygota</taxon>
        <taxon>Neoptera</taxon>
        <taxon>Endopterygota</taxon>
        <taxon>Diptera</taxon>
        <taxon>Brachycera</taxon>
        <taxon>Muscomorpha</taxon>
        <taxon>Ephydroidea</taxon>
        <taxon>Drosophilidae</taxon>
        <taxon>Drosophila</taxon>
    </lineage>
</organism>
<proteinExistence type="inferred from homology"/>
<feature type="transit peptide" description="Mitochondrion" evidence="3">
    <location>
        <begin position="1"/>
        <end position="31"/>
    </location>
</feature>
<feature type="chain" id="PRO_0000002449" description="ATP synthase subunit beta, mitochondrial">
    <location>
        <begin position="32"/>
        <end position="228" status="greater than"/>
    </location>
</feature>
<feature type="binding site" evidence="1">
    <location>
        <begin position="183"/>
        <end position="190"/>
    </location>
    <ligand>
        <name>ATP</name>
        <dbReference type="ChEBI" id="CHEBI:30616"/>
    </ligand>
</feature>
<feature type="non-terminal residue">
    <location>
        <position position="228"/>
    </location>
</feature>
<comment type="function">
    <text>Mitochondrial membrane ATP synthase (F(1)F(0) ATP synthase or Complex V) produces ATP from ADP in the presence of a proton gradient across the membrane which is generated by electron transport complexes of the respiratory chain. F-type ATPases consist of two structural domains, F(1) - containing the extramembraneous catalytic core, and F(0) - containing the membrane proton channel, linked together by a central stalk and a peripheral stalk. During catalysis, ATP synthesis in the catalytic domain of F(1) is coupled via a rotary mechanism of the central stalk subunits to proton translocation. Subunits alpha and beta form the catalytic core in F(1). Rotation of the central stalk against the surrounding alpha(3)beta(3) subunits leads to hydrolysis of ATP in three separate catalytic sites on the beta subunits.</text>
</comment>
<comment type="catalytic activity">
    <reaction evidence="4">
        <text>ATP + H2O + 4 H(+)(in) = ADP + phosphate + 5 H(+)(out)</text>
        <dbReference type="Rhea" id="RHEA:57720"/>
        <dbReference type="ChEBI" id="CHEBI:15377"/>
        <dbReference type="ChEBI" id="CHEBI:15378"/>
        <dbReference type="ChEBI" id="CHEBI:30616"/>
        <dbReference type="ChEBI" id="CHEBI:43474"/>
        <dbReference type="ChEBI" id="CHEBI:456216"/>
        <dbReference type="EC" id="7.1.2.2"/>
    </reaction>
</comment>
<comment type="subunit">
    <text>F-type ATPases have 2 components, CF(1) - the catalytic core - and CF(0) - the membrane proton channel. CF(1) has five subunits: alpha(3), beta(3), gamma(1), delta(1), epsilon(1). CF(0) has three main subunits: a, b and c.</text>
</comment>
<comment type="subcellular location">
    <subcellularLocation>
        <location>Mitochondrion</location>
    </subcellularLocation>
    <subcellularLocation>
        <location>Mitochondrion inner membrane</location>
    </subcellularLocation>
    <text>Peripheral membrane protein.</text>
</comment>
<comment type="similarity">
    <text evidence="5">Belongs to the ATPase alpha/beta chains family.</text>
</comment>
<evidence type="ECO:0000250" key="1"/>
<evidence type="ECO:0000250" key="2">
    <source>
        <dbReference type="UniProtKB" id="Q05825"/>
    </source>
</evidence>
<evidence type="ECO:0000255" key="3"/>
<evidence type="ECO:0000255" key="4">
    <source>
        <dbReference type="PROSITE-ProRule" id="PRU10106"/>
    </source>
</evidence>
<evidence type="ECO:0000305" key="5"/>